<keyword id="KW-0143">Chaperone</keyword>
<keyword id="KW-0963">Cytoplasm</keyword>
<keyword id="KW-1185">Reference proteome</keyword>
<keyword id="KW-0346">Stress response</keyword>
<protein>
    <recommendedName>
        <fullName evidence="1">Protein GrpE</fullName>
    </recommendedName>
    <alternativeName>
        <fullName evidence="1">HSP-70 cofactor</fullName>
    </alternativeName>
</protein>
<accession>B2TYN5</accession>
<comment type="function">
    <text evidence="1">Participates actively in the response to hyperosmotic and heat shock by preventing the aggregation of stress-denatured proteins, in association with DnaK and GrpE. It is the nucleotide exchange factor for DnaK and may function as a thermosensor. Unfolded proteins bind initially to DnaJ; upon interaction with the DnaJ-bound protein, DnaK hydrolyzes its bound ATP, resulting in the formation of a stable complex. GrpE releases ADP from DnaK; ATP binding to DnaK triggers the release of the substrate protein, thus completing the reaction cycle. Several rounds of ATP-dependent interactions between DnaJ, DnaK and GrpE are required for fully efficient folding.</text>
</comment>
<comment type="subunit">
    <text evidence="1">Homodimer.</text>
</comment>
<comment type="subcellular location">
    <subcellularLocation>
        <location evidence="1">Cytoplasm</location>
    </subcellularLocation>
</comment>
<comment type="similarity">
    <text evidence="1">Belongs to the GrpE family.</text>
</comment>
<organism>
    <name type="scientific">Shigella boydii serotype 18 (strain CDC 3083-94 / BS512)</name>
    <dbReference type="NCBI Taxonomy" id="344609"/>
    <lineage>
        <taxon>Bacteria</taxon>
        <taxon>Pseudomonadati</taxon>
        <taxon>Pseudomonadota</taxon>
        <taxon>Gammaproteobacteria</taxon>
        <taxon>Enterobacterales</taxon>
        <taxon>Enterobacteriaceae</taxon>
        <taxon>Shigella</taxon>
    </lineage>
</organism>
<feature type="chain" id="PRO_1000137629" description="Protein GrpE">
    <location>
        <begin position="1"/>
        <end position="197"/>
    </location>
</feature>
<feature type="region of interest" description="Disordered" evidence="2">
    <location>
        <begin position="1"/>
        <end position="39"/>
    </location>
</feature>
<gene>
    <name evidence="1" type="primary">grpE</name>
    <name type="ordered locus">SbBS512_E3002</name>
</gene>
<dbReference type="EMBL" id="CP001063">
    <property type="protein sequence ID" value="ACD09482.1"/>
    <property type="molecule type" value="Genomic_DNA"/>
</dbReference>
<dbReference type="RefSeq" id="WP_001296310.1">
    <property type="nucleotide sequence ID" value="NC_010658.1"/>
</dbReference>
<dbReference type="SMR" id="B2TYN5"/>
<dbReference type="STRING" id="344609.SbBS512_E3002"/>
<dbReference type="GeneID" id="93774463"/>
<dbReference type="KEGG" id="sbc:SbBS512_E3002"/>
<dbReference type="HOGENOM" id="CLU_057217_6_0_6"/>
<dbReference type="Proteomes" id="UP000001030">
    <property type="component" value="Chromosome"/>
</dbReference>
<dbReference type="GO" id="GO:0005829">
    <property type="term" value="C:cytosol"/>
    <property type="evidence" value="ECO:0007669"/>
    <property type="project" value="TreeGrafter"/>
</dbReference>
<dbReference type="GO" id="GO:0000774">
    <property type="term" value="F:adenyl-nucleotide exchange factor activity"/>
    <property type="evidence" value="ECO:0007669"/>
    <property type="project" value="InterPro"/>
</dbReference>
<dbReference type="GO" id="GO:0042803">
    <property type="term" value="F:protein homodimerization activity"/>
    <property type="evidence" value="ECO:0007669"/>
    <property type="project" value="InterPro"/>
</dbReference>
<dbReference type="GO" id="GO:0051087">
    <property type="term" value="F:protein-folding chaperone binding"/>
    <property type="evidence" value="ECO:0007669"/>
    <property type="project" value="InterPro"/>
</dbReference>
<dbReference type="GO" id="GO:0051082">
    <property type="term" value="F:unfolded protein binding"/>
    <property type="evidence" value="ECO:0007669"/>
    <property type="project" value="TreeGrafter"/>
</dbReference>
<dbReference type="GO" id="GO:0006457">
    <property type="term" value="P:protein folding"/>
    <property type="evidence" value="ECO:0007669"/>
    <property type="project" value="InterPro"/>
</dbReference>
<dbReference type="CDD" id="cd00446">
    <property type="entry name" value="GrpE"/>
    <property type="match status" value="1"/>
</dbReference>
<dbReference type="FunFam" id="2.30.22.10:FF:000001">
    <property type="entry name" value="Protein GrpE"/>
    <property type="match status" value="1"/>
</dbReference>
<dbReference type="FunFam" id="3.90.20.20:FF:000001">
    <property type="entry name" value="Protein GrpE"/>
    <property type="match status" value="1"/>
</dbReference>
<dbReference type="Gene3D" id="3.90.20.20">
    <property type="match status" value="1"/>
</dbReference>
<dbReference type="Gene3D" id="2.30.22.10">
    <property type="entry name" value="Head domain of nucleotide exchange factor GrpE"/>
    <property type="match status" value="1"/>
</dbReference>
<dbReference type="HAMAP" id="MF_01151">
    <property type="entry name" value="GrpE"/>
    <property type="match status" value="1"/>
</dbReference>
<dbReference type="InterPro" id="IPR000740">
    <property type="entry name" value="GrpE"/>
</dbReference>
<dbReference type="InterPro" id="IPR013805">
    <property type="entry name" value="GrpE_coiled_coil"/>
</dbReference>
<dbReference type="InterPro" id="IPR009012">
    <property type="entry name" value="GrpE_head"/>
</dbReference>
<dbReference type="NCBIfam" id="NF007655">
    <property type="entry name" value="PRK10325.1"/>
    <property type="match status" value="1"/>
</dbReference>
<dbReference type="NCBIfam" id="NF010738">
    <property type="entry name" value="PRK14140.1"/>
    <property type="match status" value="1"/>
</dbReference>
<dbReference type="NCBIfam" id="NF010748">
    <property type="entry name" value="PRK14150.1"/>
    <property type="match status" value="1"/>
</dbReference>
<dbReference type="PANTHER" id="PTHR21237">
    <property type="entry name" value="GRPE PROTEIN"/>
    <property type="match status" value="1"/>
</dbReference>
<dbReference type="PANTHER" id="PTHR21237:SF23">
    <property type="entry name" value="GRPE PROTEIN HOMOLOG, MITOCHONDRIAL"/>
    <property type="match status" value="1"/>
</dbReference>
<dbReference type="Pfam" id="PF01025">
    <property type="entry name" value="GrpE"/>
    <property type="match status" value="1"/>
</dbReference>
<dbReference type="PRINTS" id="PR00773">
    <property type="entry name" value="GRPEPROTEIN"/>
</dbReference>
<dbReference type="SUPFAM" id="SSF58014">
    <property type="entry name" value="Coiled-coil domain of nucleotide exchange factor GrpE"/>
    <property type="match status" value="1"/>
</dbReference>
<dbReference type="SUPFAM" id="SSF51064">
    <property type="entry name" value="Head domain of nucleotide exchange factor GrpE"/>
    <property type="match status" value="1"/>
</dbReference>
<dbReference type="PROSITE" id="PS01071">
    <property type="entry name" value="GRPE"/>
    <property type="match status" value="1"/>
</dbReference>
<reference key="1">
    <citation type="submission" date="2008-05" db="EMBL/GenBank/DDBJ databases">
        <title>Complete sequence of Shigella boydii serotype 18 strain BS512.</title>
        <authorList>
            <person name="Rasko D.A."/>
            <person name="Rosovitz M."/>
            <person name="Maurelli A.T."/>
            <person name="Myers G."/>
            <person name="Seshadri R."/>
            <person name="Cer R."/>
            <person name="Jiang L."/>
            <person name="Ravel J."/>
            <person name="Sebastian Y."/>
        </authorList>
    </citation>
    <scope>NUCLEOTIDE SEQUENCE [LARGE SCALE GENOMIC DNA]</scope>
    <source>
        <strain>CDC 3083-94 / BS512</strain>
    </source>
</reference>
<evidence type="ECO:0000255" key="1">
    <source>
        <dbReference type="HAMAP-Rule" id="MF_01151"/>
    </source>
</evidence>
<evidence type="ECO:0000256" key="2">
    <source>
        <dbReference type="SAM" id="MobiDB-lite"/>
    </source>
</evidence>
<sequence>MSSKEQKTPEGQAPEEIIMDQHEEIEAVEPEASAEQVDPRDEKIANLEAQLAEAQTRERDGILRVKAEMENLRRRTELDIEKAHKFALEKFINELLPVIDSLDRALEVADKANPDMSAMVEGIELTLKSMLDVVRKFGVEVIAETNVPLDPNVHQAIAMVESDDVAPGNVLGIMQKGYTLNGRTIRAAMVTVAKAKA</sequence>
<name>GRPE_SHIB3</name>
<proteinExistence type="inferred from homology"/>